<evidence type="ECO:0000250" key="1"/>
<evidence type="ECO:0000269" key="2">
    <source>
    </source>
</evidence>
<evidence type="ECO:0000305" key="3"/>
<evidence type="ECO:0007829" key="4">
    <source>
        <dbReference type="PDB" id="6VS4"/>
    </source>
</evidence>
<comment type="function">
    <text evidence="1">Small GTPase component of the coat protein complex II (COPII) which promotes the formation of transport vesicles from the endoplasmic reticulum (ER). The coat has two main functions, the physical deformation of the endoplasmic reticulum membrane into vesicles and the selection of cargo molecules. SAR1 controls the coat assembly in a stepwise manner. Activated SAR1-GTP binds to membranes first and recruits the SEC23/24 complex. These SEC23/24-SAR1 prebudding intermediates are then collected by the SEC13/31 complex as subunits polymerize to form coated transport vesicles. Conversion to SAR1-GDP triggers coat release and recycles COPII subunits (By similarity).</text>
</comment>
<comment type="catalytic activity">
    <reaction>
        <text>GTP + H2O = GDP + phosphate + H(+)</text>
        <dbReference type="Rhea" id="RHEA:19669"/>
        <dbReference type="ChEBI" id="CHEBI:15377"/>
        <dbReference type="ChEBI" id="CHEBI:15378"/>
        <dbReference type="ChEBI" id="CHEBI:37565"/>
        <dbReference type="ChEBI" id="CHEBI:43474"/>
        <dbReference type="ChEBI" id="CHEBI:58189"/>
    </reaction>
</comment>
<comment type="subunit">
    <text evidence="1">COPII is composed of at least 5 proteins: the SEC23/24 complex, the SEC13/31 complex and SAR1.</text>
</comment>
<comment type="subcellular location">
    <subcellularLocation>
        <location evidence="1">Cytoplasmic vesicle</location>
        <location evidence="1">COPII-coated vesicle membrane</location>
        <topology evidence="1">Peripheral membrane protein</topology>
        <orientation evidence="1">Cytoplasmic side</orientation>
    </subcellularLocation>
    <subcellularLocation>
        <location evidence="1">Endoplasmic reticulum membrane</location>
        <topology evidence="1">Peripheral membrane protein</topology>
        <orientation evidence="1">Cytoplasmic side</orientation>
    </subcellularLocation>
    <subcellularLocation>
        <location evidence="1">Golgi apparatus membrane</location>
        <topology evidence="1">Peripheral membrane protein</topology>
        <orientation evidence="1">Cytoplasmic side</orientation>
    </subcellularLocation>
</comment>
<comment type="developmental stage">
    <text evidence="2">Expressed in late sporogonial stages.</text>
</comment>
<comment type="similarity">
    <text evidence="3">Belongs to the small GTPase superfamily. SAR1 family.</text>
</comment>
<name>SAR1_ENCCU</name>
<dbReference type="EC" id="3.6.5.-"/>
<dbReference type="EMBL" id="AL590445">
    <property type="protein sequence ID" value="CAD26526.1"/>
    <property type="molecule type" value="Genomic_DNA"/>
</dbReference>
<dbReference type="RefSeq" id="NP_597349.1">
    <property type="nucleotide sequence ID" value="NM_001041215.1"/>
</dbReference>
<dbReference type="PDB" id="6VS4">
    <property type="method" value="X-ray"/>
    <property type="resolution" value="2.40 A"/>
    <property type="chains" value="A/B=1-221"/>
</dbReference>
<dbReference type="PDBsum" id="6VS4"/>
<dbReference type="SMR" id="Q8SS09"/>
<dbReference type="FunCoup" id="Q8SS09">
    <property type="interactions" value="211"/>
</dbReference>
<dbReference type="STRING" id="284813.Q8SS09"/>
<dbReference type="GeneID" id="859013"/>
<dbReference type="KEGG" id="ecu:ECU05_0090"/>
<dbReference type="VEuPathDB" id="MicrosporidiaDB:ECU05_0090"/>
<dbReference type="HOGENOM" id="CLU_040729_6_0_1"/>
<dbReference type="InParanoid" id="Q8SS09"/>
<dbReference type="OMA" id="NTYEPTH"/>
<dbReference type="OrthoDB" id="2011769at2759"/>
<dbReference type="Proteomes" id="UP000000819">
    <property type="component" value="Chromosome V"/>
</dbReference>
<dbReference type="GO" id="GO:0005789">
    <property type="term" value="C:endoplasmic reticulum membrane"/>
    <property type="evidence" value="ECO:0007669"/>
    <property type="project" value="UniProtKB-SubCell"/>
</dbReference>
<dbReference type="GO" id="GO:0012507">
    <property type="term" value="C:ER to Golgi transport vesicle membrane"/>
    <property type="evidence" value="ECO:0007669"/>
    <property type="project" value="UniProtKB-SubCell"/>
</dbReference>
<dbReference type="GO" id="GO:0000139">
    <property type="term" value="C:Golgi membrane"/>
    <property type="evidence" value="ECO:0007669"/>
    <property type="project" value="UniProtKB-SubCell"/>
</dbReference>
<dbReference type="GO" id="GO:0005525">
    <property type="term" value="F:GTP binding"/>
    <property type="evidence" value="ECO:0007669"/>
    <property type="project" value="UniProtKB-KW"/>
</dbReference>
<dbReference type="GO" id="GO:0003924">
    <property type="term" value="F:GTPase activity"/>
    <property type="evidence" value="ECO:0007669"/>
    <property type="project" value="InterPro"/>
</dbReference>
<dbReference type="GO" id="GO:0006886">
    <property type="term" value="P:intracellular protein transport"/>
    <property type="evidence" value="ECO:0007669"/>
    <property type="project" value="InterPro"/>
</dbReference>
<dbReference type="GO" id="GO:0016192">
    <property type="term" value="P:vesicle-mediated transport"/>
    <property type="evidence" value="ECO:0007669"/>
    <property type="project" value="UniProtKB-KW"/>
</dbReference>
<dbReference type="Gene3D" id="3.40.50.300">
    <property type="entry name" value="P-loop containing nucleotide triphosphate hydrolases"/>
    <property type="match status" value="1"/>
</dbReference>
<dbReference type="InterPro" id="IPR027417">
    <property type="entry name" value="P-loop_NTPase"/>
</dbReference>
<dbReference type="InterPro" id="IPR005225">
    <property type="entry name" value="Small_GTP-bd"/>
</dbReference>
<dbReference type="InterPro" id="IPR006689">
    <property type="entry name" value="Small_GTPase_ARF/SAR"/>
</dbReference>
<dbReference type="InterPro" id="IPR006687">
    <property type="entry name" value="Small_GTPase_SAR1"/>
</dbReference>
<dbReference type="NCBIfam" id="TIGR00231">
    <property type="entry name" value="small_GTP"/>
    <property type="match status" value="1"/>
</dbReference>
<dbReference type="PANTHER" id="PTHR45684">
    <property type="entry name" value="RE74312P"/>
    <property type="match status" value="1"/>
</dbReference>
<dbReference type="Pfam" id="PF00025">
    <property type="entry name" value="Arf"/>
    <property type="match status" value="1"/>
</dbReference>
<dbReference type="PRINTS" id="PR00328">
    <property type="entry name" value="SAR1GTPBP"/>
</dbReference>
<dbReference type="SMART" id="SM00177">
    <property type="entry name" value="ARF"/>
    <property type="match status" value="1"/>
</dbReference>
<dbReference type="SMART" id="SM00178">
    <property type="entry name" value="SAR"/>
    <property type="match status" value="1"/>
</dbReference>
<dbReference type="SUPFAM" id="SSF52540">
    <property type="entry name" value="P-loop containing nucleoside triphosphate hydrolases"/>
    <property type="match status" value="1"/>
</dbReference>
<proteinExistence type="evidence at protein level"/>
<reference key="1">
    <citation type="journal article" date="2001" name="Nature">
        <title>Genome sequence and gene compaction of the eukaryote parasite Encephalitozoon cuniculi.</title>
        <authorList>
            <person name="Katinka M.D."/>
            <person name="Duprat S."/>
            <person name="Cornillot E."/>
            <person name="Metenier G."/>
            <person name="Thomarat F."/>
            <person name="Prensier G."/>
            <person name="Barbe V."/>
            <person name="Peyretaillade E."/>
            <person name="Brottier P."/>
            <person name="Wincker P."/>
            <person name="Delbac F."/>
            <person name="El Alaoui H."/>
            <person name="Peyret P."/>
            <person name="Saurin W."/>
            <person name="Gouy M."/>
            <person name="Weissenbach J."/>
            <person name="Vivares C.P."/>
        </authorList>
    </citation>
    <scope>NUCLEOTIDE SEQUENCE [LARGE SCALE GENOMIC DNA]</scope>
    <source>
        <strain>GB-M1</strain>
    </source>
</reference>
<reference key="2">
    <citation type="journal article" date="2006" name="Proteomics">
        <title>Proteomic analysis of the eukaryotic parasite Encephalitozoon cuniculi (microsporidia): a reference map for proteins expressed in late sporogonial stages.</title>
        <authorList>
            <person name="Brosson D."/>
            <person name="Kuhn L."/>
            <person name="Delbac F."/>
            <person name="Garin J."/>
            <person name="Vivares C.P."/>
            <person name="Texier C."/>
        </authorList>
    </citation>
    <scope>IDENTIFICATION BY MASS SPECTROMETRY [LARGE SCALE ANALYSIS]</scope>
    <scope>DEVELOPMENTAL STAGE</scope>
    <scope>SUBCELLULAR LOCATION</scope>
</reference>
<gene>
    <name type="primary">SAR1</name>
    <name type="ordered locus">ECU05_0090</name>
</gene>
<feature type="chain" id="PRO_0000382918" description="Small COPII coat GTPase SAR1">
    <location>
        <begin position="1"/>
        <end position="221"/>
    </location>
</feature>
<feature type="binding site" evidence="1">
    <location>
        <begin position="48"/>
        <end position="55"/>
    </location>
    <ligand>
        <name>GTP</name>
        <dbReference type="ChEBI" id="CHEBI:37565"/>
    </ligand>
</feature>
<feature type="binding site" evidence="1">
    <location>
        <begin position="91"/>
        <end position="94"/>
    </location>
    <ligand>
        <name>GTP</name>
        <dbReference type="ChEBI" id="CHEBI:37565"/>
    </ligand>
</feature>
<feature type="binding site" evidence="1">
    <location>
        <begin position="151"/>
        <end position="154"/>
    </location>
    <ligand>
        <name>GTP</name>
        <dbReference type="ChEBI" id="CHEBI:37565"/>
    </ligand>
</feature>
<feature type="helix" evidence="4">
    <location>
        <begin position="5"/>
        <end position="29"/>
    </location>
</feature>
<feature type="strand" evidence="4">
    <location>
        <begin position="36"/>
        <end position="43"/>
    </location>
</feature>
<feature type="helix" evidence="4">
    <location>
        <begin position="48"/>
        <end position="55"/>
    </location>
</feature>
<feature type="turn" evidence="4">
    <location>
        <begin position="58"/>
        <end position="60"/>
    </location>
</feature>
<feature type="strand" evidence="4">
    <location>
        <begin position="71"/>
        <end position="76"/>
    </location>
</feature>
<feature type="strand" evidence="4">
    <location>
        <begin position="79"/>
        <end position="86"/>
    </location>
</feature>
<feature type="helix" evidence="4">
    <location>
        <begin position="91"/>
        <end position="100"/>
    </location>
</feature>
<feature type="strand" evidence="4">
    <location>
        <begin position="105"/>
        <end position="113"/>
    </location>
</feature>
<feature type="helix" evidence="4">
    <location>
        <begin position="115"/>
        <end position="117"/>
    </location>
</feature>
<feature type="helix" evidence="4">
    <location>
        <begin position="118"/>
        <end position="131"/>
    </location>
</feature>
<feature type="strand" evidence="4">
    <location>
        <begin position="133"/>
        <end position="135"/>
    </location>
</feature>
<feature type="strand" evidence="4">
    <location>
        <begin position="137"/>
        <end position="142"/>
    </location>
</feature>
<feature type="helix" evidence="4">
    <location>
        <begin position="144"/>
        <end position="147"/>
    </location>
</feature>
<feature type="helix" evidence="4">
    <location>
        <begin position="151"/>
        <end position="155"/>
    </location>
</feature>
<feature type="helix" evidence="4">
    <location>
        <begin position="158"/>
        <end position="168"/>
    </location>
</feature>
<feature type="helix" evidence="4">
    <location>
        <begin position="176"/>
        <end position="178"/>
    </location>
</feature>
<feature type="strand" evidence="4">
    <location>
        <begin position="182"/>
        <end position="186"/>
    </location>
</feature>
<feature type="helix" evidence="4">
    <location>
        <begin position="192"/>
        <end position="195"/>
    </location>
</feature>
<feature type="helix" evidence="4">
    <location>
        <begin position="200"/>
        <end position="219"/>
    </location>
</feature>
<organism>
    <name type="scientific">Encephalitozoon cuniculi (strain GB-M1)</name>
    <name type="common">Microsporidian parasite</name>
    <dbReference type="NCBI Taxonomy" id="284813"/>
    <lineage>
        <taxon>Eukaryota</taxon>
        <taxon>Fungi</taxon>
        <taxon>Fungi incertae sedis</taxon>
        <taxon>Microsporidia</taxon>
        <taxon>Unikaryonidae</taxon>
        <taxon>Encephalitozoon</taxon>
    </lineage>
</organism>
<keyword id="KW-0002">3D-structure</keyword>
<keyword id="KW-0968">Cytoplasmic vesicle</keyword>
<keyword id="KW-0256">Endoplasmic reticulum</keyword>
<keyword id="KW-0931">ER-Golgi transport</keyword>
<keyword id="KW-0333">Golgi apparatus</keyword>
<keyword id="KW-0342">GTP-binding</keyword>
<keyword id="KW-0378">Hydrolase</keyword>
<keyword id="KW-0472">Membrane</keyword>
<keyword id="KW-0547">Nucleotide-binding</keyword>
<keyword id="KW-0653">Protein transport</keyword>
<keyword id="KW-1185">Reference proteome</keyword>
<keyword id="KW-0813">Transport</keyword>
<sequence>MLDNIQEYLGVVKAKLTEFYEKVFQNFVKSLFGKPSSILFLGIDNAGKTTLVNKLKSDSTDVYMPTHHPSTSYIEIGNLKAQVIDLGGHTAARLAWRDYFYDCHGIVFIVDVHDVERFQEVREAYETVLSLEKRAPVVVLMNKIDLEGHTPETAEADYQWKSWLSQETGIENQEDPERGQVVKIFYVTITSGSANSITGPLARAFKWLEAMITYNNKKESL</sequence>
<protein>
    <recommendedName>
        <fullName>Small COPII coat GTPase SAR1</fullName>
        <ecNumber>3.6.5.-</ecNumber>
    </recommendedName>
</protein>
<accession>Q8SS09</accession>